<feature type="chain" id="PRO_1000123803" description="Arginine repressor">
    <location>
        <begin position="1"/>
        <end position="156"/>
    </location>
</feature>
<sequence length="156" mass="17096">MRSSAKQEELVRAFKALLKEEKFSSQGEIVLALQDQGFENINQSKVSRMLTKFGAVRTRNAKMEMVYCLPAELGVPTTSSPLKNLVLDIDYNDAVVVIHTSPGAAQLIARLLDSLGKAEGILGTIAGDDTIFTMPASGFSVRDLYEAILELFEQEL</sequence>
<accession>C0PZQ5</accession>
<dbReference type="EMBL" id="CP000857">
    <property type="protein sequence ID" value="ACN47515.1"/>
    <property type="molecule type" value="Genomic_DNA"/>
</dbReference>
<dbReference type="RefSeq" id="WP_001257850.1">
    <property type="nucleotide sequence ID" value="NC_012125.1"/>
</dbReference>
<dbReference type="SMR" id="C0PZQ5"/>
<dbReference type="KEGG" id="sei:SPC_3430"/>
<dbReference type="HOGENOM" id="CLU_097103_2_0_6"/>
<dbReference type="UniPathway" id="UPA00068"/>
<dbReference type="Proteomes" id="UP000001599">
    <property type="component" value="Chromosome"/>
</dbReference>
<dbReference type="GO" id="GO:0005737">
    <property type="term" value="C:cytoplasm"/>
    <property type="evidence" value="ECO:0007669"/>
    <property type="project" value="UniProtKB-SubCell"/>
</dbReference>
<dbReference type="GO" id="GO:0034618">
    <property type="term" value="F:arginine binding"/>
    <property type="evidence" value="ECO:0007669"/>
    <property type="project" value="InterPro"/>
</dbReference>
<dbReference type="GO" id="GO:0003677">
    <property type="term" value="F:DNA binding"/>
    <property type="evidence" value="ECO:0007669"/>
    <property type="project" value="UniProtKB-KW"/>
</dbReference>
<dbReference type="GO" id="GO:0003700">
    <property type="term" value="F:DNA-binding transcription factor activity"/>
    <property type="evidence" value="ECO:0007669"/>
    <property type="project" value="UniProtKB-UniRule"/>
</dbReference>
<dbReference type="GO" id="GO:0006526">
    <property type="term" value="P:L-arginine biosynthetic process"/>
    <property type="evidence" value="ECO:0007669"/>
    <property type="project" value="UniProtKB-UniPathway"/>
</dbReference>
<dbReference type="GO" id="GO:0051259">
    <property type="term" value="P:protein complex oligomerization"/>
    <property type="evidence" value="ECO:0007669"/>
    <property type="project" value="InterPro"/>
</dbReference>
<dbReference type="GO" id="GO:1900079">
    <property type="term" value="P:regulation of arginine biosynthetic process"/>
    <property type="evidence" value="ECO:0007669"/>
    <property type="project" value="UniProtKB-UniRule"/>
</dbReference>
<dbReference type="FunFam" id="1.10.10.10:FF:000074">
    <property type="entry name" value="Arginine repressor"/>
    <property type="match status" value="1"/>
</dbReference>
<dbReference type="FunFam" id="3.30.1360.40:FF:000004">
    <property type="entry name" value="Arginine repressor"/>
    <property type="match status" value="1"/>
</dbReference>
<dbReference type="Gene3D" id="3.30.1360.40">
    <property type="match status" value="1"/>
</dbReference>
<dbReference type="Gene3D" id="1.10.10.10">
    <property type="entry name" value="Winged helix-like DNA-binding domain superfamily/Winged helix DNA-binding domain"/>
    <property type="match status" value="1"/>
</dbReference>
<dbReference type="HAMAP" id="MF_00173">
    <property type="entry name" value="Arg_repressor"/>
    <property type="match status" value="1"/>
</dbReference>
<dbReference type="InterPro" id="IPR001669">
    <property type="entry name" value="Arg_repress"/>
</dbReference>
<dbReference type="InterPro" id="IPR020899">
    <property type="entry name" value="Arg_repress_C"/>
</dbReference>
<dbReference type="InterPro" id="IPR036251">
    <property type="entry name" value="Arg_repress_C_sf"/>
</dbReference>
<dbReference type="InterPro" id="IPR020900">
    <property type="entry name" value="Arg_repress_DNA-bd"/>
</dbReference>
<dbReference type="InterPro" id="IPR036388">
    <property type="entry name" value="WH-like_DNA-bd_sf"/>
</dbReference>
<dbReference type="InterPro" id="IPR036390">
    <property type="entry name" value="WH_DNA-bd_sf"/>
</dbReference>
<dbReference type="NCBIfam" id="TIGR01529">
    <property type="entry name" value="argR_whole"/>
    <property type="match status" value="1"/>
</dbReference>
<dbReference type="NCBIfam" id="NF003457">
    <property type="entry name" value="PRK05066.1"/>
    <property type="match status" value="1"/>
</dbReference>
<dbReference type="PANTHER" id="PTHR34471">
    <property type="entry name" value="ARGININE REPRESSOR"/>
    <property type="match status" value="1"/>
</dbReference>
<dbReference type="PANTHER" id="PTHR34471:SF1">
    <property type="entry name" value="ARGININE REPRESSOR"/>
    <property type="match status" value="1"/>
</dbReference>
<dbReference type="Pfam" id="PF01316">
    <property type="entry name" value="Arg_repressor"/>
    <property type="match status" value="1"/>
</dbReference>
<dbReference type="Pfam" id="PF02863">
    <property type="entry name" value="Arg_repressor_C"/>
    <property type="match status" value="1"/>
</dbReference>
<dbReference type="PRINTS" id="PR01467">
    <property type="entry name" value="ARGREPRESSOR"/>
</dbReference>
<dbReference type="SUPFAM" id="SSF55252">
    <property type="entry name" value="C-terminal domain of arginine repressor"/>
    <property type="match status" value="1"/>
</dbReference>
<dbReference type="SUPFAM" id="SSF46785">
    <property type="entry name" value="Winged helix' DNA-binding domain"/>
    <property type="match status" value="1"/>
</dbReference>
<reference key="1">
    <citation type="journal article" date="2009" name="PLoS ONE">
        <title>Salmonella paratyphi C: genetic divergence from Salmonella choleraesuis and pathogenic convergence with Salmonella typhi.</title>
        <authorList>
            <person name="Liu W.-Q."/>
            <person name="Feng Y."/>
            <person name="Wang Y."/>
            <person name="Zou Q.-H."/>
            <person name="Chen F."/>
            <person name="Guo J.-T."/>
            <person name="Peng Y.-H."/>
            <person name="Jin Y."/>
            <person name="Li Y.-G."/>
            <person name="Hu S.-N."/>
            <person name="Johnston R.N."/>
            <person name="Liu G.-R."/>
            <person name="Liu S.-L."/>
        </authorList>
    </citation>
    <scope>NUCLEOTIDE SEQUENCE [LARGE SCALE GENOMIC DNA]</scope>
    <source>
        <strain>RKS4594</strain>
    </source>
</reference>
<organism>
    <name type="scientific">Salmonella paratyphi C (strain RKS4594)</name>
    <dbReference type="NCBI Taxonomy" id="476213"/>
    <lineage>
        <taxon>Bacteria</taxon>
        <taxon>Pseudomonadati</taxon>
        <taxon>Pseudomonadota</taxon>
        <taxon>Gammaproteobacteria</taxon>
        <taxon>Enterobacterales</taxon>
        <taxon>Enterobacteriaceae</taxon>
        <taxon>Salmonella</taxon>
    </lineage>
</organism>
<name>ARGR_SALPC</name>
<proteinExistence type="inferred from homology"/>
<keyword id="KW-0028">Amino-acid biosynthesis</keyword>
<keyword id="KW-0055">Arginine biosynthesis</keyword>
<keyword id="KW-0963">Cytoplasm</keyword>
<keyword id="KW-0238">DNA-binding</keyword>
<keyword id="KW-0678">Repressor</keyword>
<keyword id="KW-0804">Transcription</keyword>
<keyword id="KW-0805">Transcription regulation</keyword>
<gene>
    <name evidence="1" type="primary">argR</name>
    <name type="ordered locus">SPC_3430</name>
</gene>
<evidence type="ECO:0000255" key="1">
    <source>
        <dbReference type="HAMAP-Rule" id="MF_00173"/>
    </source>
</evidence>
<comment type="function">
    <text evidence="1">Regulates arginine biosynthesis genes.</text>
</comment>
<comment type="pathway">
    <text>Amino-acid biosynthesis; L-arginine biosynthesis [regulation].</text>
</comment>
<comment type="subcellular location">
    <subcellularLocation>
        <location evidence="1">Cytoplasm</location>
    </subcellularLocation>
</comment>
<comment type="similarity">
    <text evidence="1">Belongs to the ArgR family.</text>
</comment>
<protein>
    <recommendedName>
        <fullName evidence="1">Arginine repressor</fullName>
    </recommendedName>
</protein>